<keyword id="KW-0007">Acetylation</keyword>
<keyword id="KW-0067">ATP-binding</keyword>
<keyword id="KW-0131">Cell cycle</keyword>
<keyword id="KW-0132">Cell division</keyword>
<keyword id="KW-0158">Chromosome</keyword>
<keyword id="KW-0227">DNA damage</keyword>
<keyword id="KW-0233">DNA recombination</keyword>
<keyword id="KW-0234">DNA repair</keyword>
<keyword id="KW-0498">Mitosis</keyword>
<keyword id="KW-0547">Nucleotide-binding</keyword>
<keyword id="KW-0539">Nucleus</keyword>
<keyword id="KW-0597">Phosphoprotein</keyword>
<keyword id="KW-1185">Reference proteome</keyword>
<keyword id="KW-0804">Transcription</keyword>
<keyword id="KW-0805">Transcription regulation</keyword>
<accession>Q1LZF2</accession>
<reference key="1">
    <citation type="submission" date="2006-05" db="EMBL/GenBank/DDBJ databases">
        <authorList>
            <consortium name="NIH - Mammalian Gene Collection (MGC) project"/>
        </authorList>
    </citation>
    <scope>NUCLEOTIDE SEQUENCE [LARGE SCALE MRNA]</scope>
    <source>
        <strain>Hereford</strain>
        <tissue>Ascending colon</tissue>
    </source>
</reference>
<protein>
    <recommendedName>
        <fullName>Actin-related protein 8</fullName>
    </recommendedName>
</protein>
<name>ARP8_BOVIN</name>
<organism>
    <name type="scientific">Bos taurus</name>
    <name type="common">Bovine</name>
    <dbReference type="NCBI Taxonomy" id="9913"/>
    <lineage>
        <taxon>Eukaryota</taxon>
        <taxon>Metazoa</taxon>
        <taxon>Chordata</taxon>
        <taxon>Craniata</taxon>
        <taxon>Vertebrata</taxon>
        <taxon>Euteleostomi</taxon>
        <taxon>Mammalia</taxon>
        <taxon>Eutheria</taxon>
        <taxon>Laurasiatheria</taxon>
        <taxon>Artiodactyla</taxon>
        <taxon>Ruminantia</taxon>
        <taxon>Pecora</taxon>
        <taxon>Bovidae</taxon>
        <taxon>Bovinae</taxon>
        <taxon>Bos</taxon>
    </lineage>
</organism>
<comment type="function">
    <text evidence="1">Plays an important role in the functional organization of mitotic chromosomes. Exhibits low basal ATPase activity, and unable to polymerize (By similarity).</text>
</comment>
<comment type="function">
    <text evidence="1">Proposed core component of the chromatin remodeling INO80 complex which is involved in transcriptional regulation, DNA replication and probably DNA repair. Required for the recruitment of INO80 (and probably the INO80 complex) to sites of DNA damage Strongly prefer nucleosomes and H3-H4 tetramers over H2A-H2B dimers, suggesting it may act as a nucleosome recognition module within the complex (By similarity).</text>
</comment>
<comment type="subunit">
    <text evidence="1">Component of the chromatin remodeling INO80 complex; specifically part of a complex module associated with the DBINO domain of INO80. Exists as monomers and dimers, but the dimer is most probably the biologically relevant form required for stable interactions with histones that exploits the twofold symmetry of the nucleosome core (By similarity).</text>
</comment>
<comment type="subcellular location">
    <subcellularLocation>
        <location evidence="1">Nucleus</location>
    </subcellularLocation>
    <subcellularLocation>
        <location evidence="1">Chromosome</location>
    </subcellularLocation>
    <text evidence="1">Specifically localizes to mitotic chromosomes.</text>
</comment>
<comment type="similarity">
    <text evidence="4">Belongs to the actin family. ARP8 subfamily.</text>
</comment>
<feature type="chain" id="PRO_0000260759" description="Actin-related protein 8">
    <location>
        <begin position="1"/>
        <end position="624"/>
    </location>
</feature>
<feature type="region of interest" description="Disordered" evidence="3">
    <location>
        <begin position="1"/>
        <end position="29"/>
    </location>
</feature>
<feature type="region of interest" description="Disordered" evidence="3">
    <location>
        <begin position="430"/>
        <end position="462"/>
    </location>
</feature>
<feature type="compositionally biased region" description="Basic and acidic residues" evidence="3">
    <location>
        <begin position="1"/>
        <end position="25"/>
    </location>
</feature>
<feature type="binding site" evidence="1">
    <location>
        <position position="55"/>
    </location>
    <ligand>
        <name>ATP</name>
        <dbReference type="ChEBI" id="CHEBI:30616"/>
    </ligand>
</feature>
<feature type="binding site" evidence="1">
    <location>
        <position position="56"/>
    </location>
    <ligand>
        <name>ATP</name>
        <dbReference type="ChEBI" id="CHEBI:30616"/>
    </ligand>
</feature>
<feature type="binding site" evidence="1">
    <location>
        <begin position="283"/>
        <end position="286"/>
    </location>
    <ligand>
        <name>ATP</name>
        <dbReference type="ChEBI" id="CHEBI:30616"/>
    </ligand>
</feature>
<feature type="modified residue" description="N-acetylmethionine" evidence="2">
    <location>
        <position position="1"/>
    </location>
</feature>
<feature type="modified residue" description="Phosphoserine" evidence="2">
    <location>
        <position position="132"/>
    </location>
</feature>
<feature type="modified residue" description="Phosphoserine" evidence="2">
    <location>
        <position position="412"/>
    </location>
</feature>
<gene>
    <name type="primary">ACTR8</name>
    <name type="synonym">ARP8</name>
</gene>
<evidence type="ECO:0000250" key="1"/>
<evidence type="ECO:0000250" key="2">
    <source>
        <dbReference type="UniProtKB" id="Q9H981"/>
    </source>
</evidence>
<evidence type="ECO:0000256" key="3">
    <source>
        <dbReference type="SAM" id="MobiDB-lite"/>
    </source>
</evidence>
<evidence type="ECO:0000305" key="4"/>
<proteinExistence type="evidence at transcript level"/>
<sequence length="624" mass="70485">MTQAEKGEAENGKEKGGEKEKEQRGVKRPIVPALVPESLQEQIQSNFIVVIHPGSTTLRIGRATDTLPASVPHVIARRHKQQGQPLYKDSWLLREGLNKPESNEQRQNGLKMVDQAIWSKKMSNGTRRIPVSPEQARSYNKQMRPAILDHCSGNKWTNTSHHPEFLVGEEALYVNPLDCYNIHWPIRRGQLNIHPGPGGSLTAVLADIEVIWSHAIQKYLEIPLKDLKYYRCILLIPDIYNKQHVKELVNMILMKMGFSGIVVHQESVCATFGSGLSSTCIVDVGDQKTSVCCVEDGVSHRNTRLCLAYGGSDVSRCFYWLMQRAGFPYRECQLTNKMDCLLLQHLKETFCHLDQDISGLQDHEFQIRHPDSPALLYQFRLGDEKLQAPMALFYPATFGIVGQKMTTLQHRSQGDPEDPHDEQYLLATQSKQEQSAKATADRKSASKPIGFEGDLRGQSSDLPERLHSQEVDLGPSQGDCLMAGNDSEEALTALMSRKTAISLFEGKALGLDKAILHSIDCCSSDETKKKMYSSILVVGGGLMFHKAQEFLQHRILNKMPPSFRRIIENVDVITRPKDMDPRLIAWKGGAVLACLDTTQELWIYQREWQRFGVRMLRERAAFVW</sequence>
<dbReference type="EMBL" id="BC116036">
    <property type="protein sequence ID" value="AAI16037.1"/>
    <property type="molecule type" value="mRNA"/>
</dbReference>
<dbReference type="RefSeq" id="NP_001069829.1">
    <property type="nucleotide sequence ID" value="NM_001076361.1"/>
</dbReference>
<dbReference type="SMR" id="Q1LZF2"/>
<dbReference type="FunCoup" id="Q1LZF2">
    <property type="interactions" value="5300"/>
</dbReference>
<dbReference type="STRING" id="9913.ENSBTAP00000066864"/>
<dbReference type="PaxDb" id="9913-ENSBTAP00000014847"/>
<dbReference type="GeneID" id="615133"/>
<dbReference type="KEGG" id="bta:615133"/>
<dbReference type="CTD" id="93973"/>
<dbReference type="VEuPathDB" id="HostDB:ENSBTAG00000011180"/>
<dbReference type="eggNOG" id="KOG0797">
    <property type="taxonomic scope" value="Eukaryota"/>
</dbReference>
<dbReference type="HOGENOM" id="CLU_006974_1_0_1"/>
<dbReference type="InParanoid" id="Q1LZF2"/>
<dbReference type="OMA" id="AYKCMWA"/>
<dbReference type="OrthoDB" id="5572108at2759"/>
<dbReference type="TreeFam" id="TF324575"/>
<dbReference type="Reactome" id="R-BTA-5689603">
    <property type="pathway name" value="UCH proteinases"/>
</dbReference>
<dbReference type="Reactome" id="R-BTA-5696394">
    <property type="pathway name" value="DNA Damage Recognition in GG-NER"/>
</dbReference>
<dbReference type="Proteomes" id="UP000009136">
    <property type="component" value="Chromosome 22"/>
</dbReference>
<dbReference type="Bgee" id="ENSBTAG00000011180">
    <property type="expression patterns" value="Expressed in spermatocyte and 107 other cell types or tissues"/>
</dbReference>
<dbReference type="GO" id="GO:0031011">
    <property type="term" value="C:Ino80 complex"/>
    <property type="evidence" value="ECO:0000318"/>
    <property type="project" value="GO_Central"/>
</dbReference>
<dbReference type="GO" id="GO:0005524">
    <property type="term" value="F:ATP binding"/>
    <property type="evidence" value="ECO:0007669"/>
    <property type="project" value="UniProtKB-KW"/>
</dbReference>
<dbReference type="GO" id="GO:0051301">
    <property type="term" value="P:cell division"/>
    <property type="evidence" value="ECO:0007669"/>
    <property type="project" value="UniProtKB-KW"/>
</dbReference>
<dbReference type="GO" id="GO:0006310">
    <property type="term" value="P:DNA recombination"/>
    <property type="evidence" value="ECO:0007669"/>
    <property type="project" value="UniProtKB-KW"/>
</dbReference>
<dbReference type="GO" id="GO:0006302">
    <property type="term" value="P:double-strand break repair"/>
    <property type="evidence" value="ECO:0000318"/>
    <property type="project" value="GO_Central"/>
</dbReference>
<dbReference type="GO" id="GO:0006355">
    <property type="term" value="P:regulation of DNA-templated transcription"/>
    <property type="evidence" value="ECO:0000318"/>
    <property type="project" value="GO_Central"/>
</dbReference>
<dbReference type="CDD" id="cd10206">
    <property type="entry name" value="ASKHA_NBD_Arp8-like"/>
    <property type="match status" value="1"/>
</dbReference>
<dbReference type="FunFam" id="3.30.420.40:FF:000100">
    <property type="entry name" value="Actin-related protein 8"/>
    <property type="match status" value="1"/>
</dbReference>
<dbReference type="FunFam" id="3.30.420.40:FF:000134">
    <property type="entry name" value="Actin-related protein 8"/>
    <property type="match status" value="1"/>
</dbReference>
<dbReference type="FunFam" id="3.90.640.10:FF:000020">
    <property type="entry name" value="Actin-related protein 8"/>
    <property type="match status" value="1"/>
</dbReference>
<dbReference type="Gene3D" id="2.30.36.90">
    <property type="match status" value="1"/>
</dbReference>
<dbReference type="Gene3D" id="3.30.420.40">
    <property type="match status" value="2"/>
</dbReference>
<dbReference type="Gene3D" id="3.90.640.10">
    <property type="entry name" value="Actin, Chain A, domain 4"/>
    <property type="match status" value="1"/>
</dbReference>
<dbReference type="InterPro" id="IPR004000">
    <property type="entry name" value="Actin"/>
</dbReference>
<dbReference type="InterPro" id="IPR043129">
    <property type="entry name" value="ATPase_NBD"/>
</dbReference>
<dbReference type="PANTHER" id="PTHR11937">
    <property type="entry name" value="ACTIN"/>
    <property type="match status" value="1"/>
</dbReference>
<dbReference type="Pfam" id="PF00022">
    <property type="entry name" value="Actin"/>
    <property type="match status" value="2"/>
</dbReference>
<dbReference type="SMART" id="SM00268">
    <property type="entry name" value="ACTIN"/>
    <property type="match status" value="1"/>
</dbReference>
<dbReference type="SUPFAM" id="SSF53067">
    <property type="entry name" value="Actin-like ATPase domain"/>
    <property type="match status" value="2"/>
</dbReference>